<feature type="signal peptide" evidence="4">
    <location>
        <begin position="1"/>
        <end position="19"/>
    </location>
</feature>
<feature type="chain" id="PRO_0000035717" description="Serotransferrin">
    <location>
        <begin position="20"/>
        <end position="695"/>
    </location>
</feature>
<feature type="domain" description="Transferrin-like 1" evidence="3">
    <location>
        <begin position="25"/>
        <end position="347"/>
    </location>
</feature>
<feature type="domain" description="Transferrin-like 2" evidence="3">
    <location>
        <begin position="361"/>
        <end position="680"/>
    </location>
</feature>
<feature type="binding site">
    <location>
        <position position="82"/>
    </location>
    <ligand>
        <name>Fe(3+)</name>
        <dbReference type="ChEBI" id="CHEBI:29034"/>
        <label>1</label>
    </ligand>
</feature>
<feature type="binding site">
    <location>
        <position position="114"/>
    </location>
    <ligand>
        <name>Fe(3+)</name>
        <dbReference type="ChEBI" id="CHEBI:29034"/>
        <label>1</label>
    </ligand>
</feature>
<feature type="binding site">
    <location>
        <position position="139"/>
    </location>
    <ligand>
        <name>hydrogencarbonate</name>
        <dbReference type="ChEBI" id="CHEBI:17544"/>
        <label>1</label>
    </ligand>
</feature>
<feature type="binding site">
    <location>
        <position position="143"/>
    </location>
    <ligand>
        <name>hydrogencarbonate</name>
        <dbReference type="ChEBI" id="CHEBI:17544"/>
        <label>1</label>
    </ligand>
</feature>
<feature type="binding site">
    <location>
        <position position="145"/>
    </location>
    <ligand>
        <name>hydrogencarbonate</name>
        <dbReference type="ChEBI" id="CHEBI:17544"/>
        <label>1</label>
    </ligand>
</feature>
<feature type="binding site">
    <location>
        <position position="146"/>
    </location>
    <ligand>
        <name>hydrogencarbonate</name>
        <dbReference type="ChEBI" id="CHEBI:17544"/>
        <label>1</label>
    </ligand>
</feature>
<feature type="binding site">
    <location>
        <position position="207"/>
    </location>
    <ligand>
        <name>Fe(3+)</name>
        <dbReference type="ChEBI" id="CHEBI:29034"/>
        <label>1</label>
    </ligand>
</feature>
<feature type="binding site">
    <location>
        <position position="268"/>
    </location>
    <ligand>
        <name>Fe(3+)</name>
        <dbReference type="ChEBI" id="CHEBI:29034"/>
        <label>1</label>
    </ligand>
</feature>
<feature type="binding site">
    <location>
        <position position="411"/>
    </location>
    <ligand>
        <name>Fe(3+)</name>
        <dbReference type="ChEBI" id="CHEBI:29034"/>
        <label>2</label>
    </ligand>
</feature>
<feature type="binding site">
    <location>
        <position position="444"/>
    </location>
    <ligand>
        <name>Fe(3+)</name>
        <dbReference type="ChEBI" id="CHEBI:29034"/>
        <label>2</label>
    </ligand>
</feature>
<feature type="binding site">
    <location>
        <position position="470"/>
    </location>
    <ligand>
        <name>hydrogencarbonate</name>
        <dbReference type="ChEBI" id="CHEBI:17544"/>
        <label>2</label>
    </ligand>
</feature>
<feature type="binding site">
    <location>
        <position position="474"/>
    </location>
    <ligand>
        <name>hydrogencarbonate</name>
        <dbReference type="ChEBI" id="CHEBI:17544"/>
        <label>2</label>
    </ligand>
</feature>
<feature type="binding site">
    <location>
        <position position="476"/>
    </location>
    <ligand>
        <name>hydrogencarbonate</name>
        <dbReference type="ChEBI" id="CHEBI:17544"/>
        <label>2</label>
    </ligand>
</feature>
<feature type="binding site">
    <location>
        <position position="477"/>
    </location>
    <ligand>
        <name>hydrogencarbonate</name>
        <dbReference type="ChEBI" id="CHEBI:17544"/>
        <label>2</label>
    </ligand>
</feature>
<feature type="binding site">
    <location>
        <position position="533"/>
    </location>
    <ligand>
        <name>Fe(3+)</name>
        <dbReference type="ChEBI" id="CHEBI:29034"/>
        <label>2</label>
    </ligand>
</feature>
<feature type="binding site">
    <location>
        <position position="601"/>
    </location>
    <ligand>
        <name>Fe(3+)</name>
        <dbReference type="ChEBI" id="CHEBI:29034"/>
        <label>2</label>
    </ligand>
</feature>
<feature type="modified residue" description="Dimethylated arginine" evidence="2">
    <location>
        <position position="42"/>
    </location>
</feature>
<feature type="modified residue" description="Phosphoserine" evidence="1">
    <location>
        <position position="389"/>
    </location>
</feature>
<feature type="modified residue" description="Phosphoserine" evidence="1">
    <location>
        <position position="682"/>
    </location>
</feature>
<feature type="glycosylation site" description="N-linked (GlcNAc...) asparagine">
    <location>
        <position position="509"/>
    </location>
</feature>
<feature type="disulfide bond">
    <location>
        <begin position="28"/>
        <end position="67"/>
    </location>
</feature>
<feature type="disulfide bond">
    <location>
        <begin position="38"/>
        <end position="58"/>
    </location>
</feature>
<feature type="disulfide bond">
    <location>
        <begin position="137"/>
        <end position="213"/>
    </location>
</feature>
<feature type="disulfide bond">
    <location>
        <begin position="156"/>
        <end position="350"/>
    </location>
</feature>
<feature type="disulfide bond">
    <location>
        <begin position="177"/>
        <end position="193"/>
    </location>
</feature>
<feature type="disulfide bond">
    <location>
        <begin position="180"/>
        <end position="196"/>
    </location>
</feature>
<feature type="disulfide bond">
    <location>
        <begin position="190"/>
        <end position="198"/>
    </location>
</feature>
<feature type="disulfide bond">
    <location>
        <begin position="246"/>
        <end position="260"/>
    </location>
</feature>
<feature type="disulfide bond">
    <location>
        <begin position="358"/>
        <end position="612"/>
    </location>
</feature>
<feature type="disulfide bond">
    <location>
        <begin position="364"/>
        <end position="396"/>
    </location>
</feature>
<feature type="disulfide bond">
    <location>
        <begin position="374"/>
        <end position="387"/>
    </location>
</feature>
<feature type="disulfide bond">
    <location>
        <begin position="421"/>
        <end position="690"/>
    </location>
</feature>
<feature type="disulfide bond">
    <location>
        <begin position="436"/>
        <end position="653"/>
    </location>
</feature>
<feature type="disulfide bond">
    <location>
        <begin position="468"/>
        <end position="539"/>
    </location>
</feature>
<feature type="disulfide bond">
    <location>
        <begin position="492"/>
        <end position="681"/>
    </location>
</feature>
<feature type="disulfide bond">
    <location>
        <begin position="502"/>
        <end position="516"/>
    </location>
</feature>
<feature type="disulfide bond">
    <location>
        <begin position="513"/>
        <end position="522"/>
    </location>
</feature>
<feature type="disulfide bond">
    <location>
        <begin position="579"/>
        <end position="593"/>
    </location>
</feature>
<feature type="disulfide bond">
    <location>
        <begin position="631"/>
        <end position="636"/>
    </location>
</feature>
<feature type="sequence variant">
    <original>V</original>
    <variation>I</variation>
    <location>
        <position position="517"/>
    </location>
</feature>
<feature type="sequence conflict" description="In Ref. 1; CAA41424." evidence="5" ref="1">
    <location>
        <position position="7"/>
    </location>
</feature>
<feature type="sequence conflict" description="In Ref. 3; AA sequence." evidence="5" ref="3">
    <original>K</original>
    <variation>S</variation>
    <location>
        <position position="47"/>
    </location>
</feature>
<feature type="sequence conflict" description="In Ref. 3; AA sequence." evidence="5" ref="3">
    <original>P</original>
    <variation>Y</variation>
    <location>
        <position position="50"/>
    </location>
</feature>
<feature type="strand" evidence="7">
    <location>
        <begin position="27"/>
        <end position="29"/>
    </location>
</feature>
<feature type="helix" evidence="7">
    <location>
        <begin position="32"/>
        <end position="45"/>
    </location>
</feature>
<feature type="turn" evidence="7">
    <location>
        <begin position="46"/>
        <end position="48"/>
    </location>
</feature>
<feature type="strand" evidence="7">
    <location>
        <begin position="51"/>
        <end position="53"/>
    </location>
</feature>
<feature type="strand" evidence="6">
    <location>
        <begin position="55"/>
        <end position="63"/>
    </location>
</feature>
<feature type="helix" evidence="7">
    <location>
        <begin position="64"/>
        <end position="72"/>
    </location>
</feature>
<feature type="strand" evidence="7">
    <location>
        <begin position="78"/>
        <end position="81"/>
    </location>
</feature>
<feature type="helix" evidence="7">
    <location>
        <begin position="83"/>
        <end position="90"/>
    </location>
</feature>
<feature type="turn" evidence="7">
    <location>
        <begin position="91"/>
        <end position="94"/>
    </location>
</feature>
<feature type="strand" evidence="7">
    <location>
        <begin position="96"/>
        <end position="102"/>
    </location>
</feature>
<feature type="strand" evidence="7">
    <location>
        <begin position="107"/>
        <end position="109"/>
    </location>
</feature>
<feature type="strand" evidence="7">
    <location>
        <begin position="114"/>
        <end position="121"/>
    </location>
</feature>
<feature type="helix" evidence="6">
    <location>
        <begin position="128"/>
        <end position="130"/>
    </location>
</feature>
<feature type="strand" evidence="6">
    <location>
        <begin position="136"/>
        <end position="139"/>
    </location>
</feature>
<feature type="turn" evidence="7">
    <location>
        <begin position="144"/>
        <end position="147"/>
    </location>
</feature>
<feature type="helix" evidence="7">
    <location>
        <begin position="148"/>
        <end position="154"/>
    </location>
</feature>
<feature type="turn" evidence="7">
    <location>
        <begin position="155"/>
        <end position="157"/>
    </location>
</feature>
<feature type="helix" evidence="7">
    <location>
        <begin position="165"/>
        <end position="170"/>
    </location>
</feature>
<feature type="strand" evidence="7">
    <location>
        <begin position="173"/>
        <end position="177"/>
    </location>
</feature>
<feature type="turn" evidence="6">
    <location>
        <begin position="183"/>
        <end position="185"/>
    </location>
</feature>
<feature type="strand" evidence="7">
    <location>
        <begin position="190"/>
        <end position="193"/>
    </location>
</feature>
<feature type="strand" evidence="7">
    <location>
        <begin position="198"/>
        <end position="200"/>
    </location>
</feature>
<feature type="strand" evidence="7">
    <location>
        <begin position="202"/>
        <end position="206"/>
    </location>
</feature>
<feature type="helix" evidence="7">
    <location>
        <begin position="207"/>
        <end position="214"/>
    </location>
</feature>
<feature type="turn" evidence="7">
    <location>
        <begin position="215"/>
        <end position="217"/>
    </location>
</feature>
<feature type="strand" evidence="7">
    <location>
        <begin position="218"/>
        <end position="225"/>
    </location>
</feature>
<feature type="helix" evidence="7">
    <location>
        <begin position="228"/>
        <end position="232"/>
    </location>
</feature>
<feature type="helix" evidence="7">
    <location>
        <begin position="236"/>
        <end position="239"/>
    </location>
</feature>
<feature type="strand" evidence="7">
    <location>
        <begin position="242"/>
        <end position="246"/>
    </location>
</feature>
<feature type="turn" evidence="7">
    <location>
        <begin position="247"/>
        <end position="249"/>
    </location>
</feature>
<feature type="strand" evidence="7">
    <location>
        <begin position="250"/>
        <end position="253"/>
    </location>
</feature>
<feature type="helix" evidence="6">
    <location>
        <begin position="254"/>
        <end position="256"/>
    </location>
</feature>
<feature type="turn" evidence="7">
    <location>
        <begin position="257"/>
        <end position="259"/>
    </location>
</feature>
<feature type="strand" evidence="7">
    <location>
        <begin position="262"/>
        <end position="265"/>
    </location>
</feature>
<feature type="strand" evidence="7">
    <location>
        <begin position="269"/>
        <end position="276"/>
    </location>
</feature>
<feature type="helix" evidence="7">
    <location>
        <begin position="279"/>
        <end position="288"/>
    </location>
</feature>
<feature type="turn" evidence="7">
    <location>
        <begin position="289"/>
        <end position="291"/>
    </location>
</feature>
<feature type="strand" evidence="7">
    <location>
        <begin position="292"/>
        <end position="296"/>
    </location>
</feature>
<feature type="strand" evidence="7">
    <location>
        <begin position="309"/>
        <end position="311"/>
    </location>
</feature>
<feature type="strand" evidence="6">
    <location>
        <begin position="320"/>
        <end position="323"/>
    </location>
</feature>
<feature type="helix" evidence="6">
    <location>
        <begin position="330"/>
        <end position="334"/>
    </location>
</feature>
<feature type="helix" evidence="6">
    <location>
        <begin position="336"/>
        <end position="346"/>
    </location>
</feature>
<feature type="strand" evidence="6">
    <location>
        <begin position="361"/>
        <end position="366"/>
    </location>
</feature>
<feature type="helix" evidence="6">
    <location>
        <begin position="368"/>
        <end position="381"/>
    </location>
</feature>
<feature type="strand" evidence="6">
    <location>
        <begin position="382"/>
        <end position="392"/>
    </location>
</feature>
<feature type="helix" evidence="6">
    <location>
        <begin position="393"/>
        <end position="401"/>
    </location>
</feature>
<feature type="strand" evidence="6">
    <location>
        <begin position="407"/>
        <end position="410"/>
    </location>
</feature>
<feature type="helix" evidence="6">
    <location>
        <begin position="412"/>
        <end position="420"/>
    </location>
</feature>
<feature type="strand" evidence="6">
    <location>
        <begin position="424"/>
        <end position="430"/>
    </location>
</feature>
<feature type="strand" evidence="6">
    <location>
        <begin position="444"/>
        <end position="453"/>
    </location>
</feature>
<feature type="helix" evidence="6">
    <location>
        <begin position="459"/>
        <end position="461"/>
    </location>
</feature>
<feature type="strand" evidence="6">
    <location>
        <begin position="465"/>
        <end position="470"/>
    </location>
</feature>
<feature type="turn" evidence="6">
    <location>
        <begin position="475"/>
        <end position="478"/>
    </location>
</feature>
<feature type="helix" evidence="6">
    <location>
        <begin position="479"/>
        <end position="489"/>
    </location>
</feature>
<feature type="helix" evidence="6">
    <location>
        <begin position="494"/>
        <end position="497"/>
    </location>
</feature>
<feature type="strand" evidence="6">
    <location>
        <begin position="498"/>
        <end position="502"/>
    </location>
</feature>
<feature type="helix" evidence="6">
    <location>
        <begin position="511"/>
        <end position="513"/>
    </location>
</feature>
<feature type="strand" evidence="6">
    <location>
        <begin position="518"/>
        <end position="520"/>
    </location>
</feature>
<feature type="helix" evidence="6">
    <location>
        <begin position="532"/>
        <end position="542"/>
    </location>
</feature>
<feature type="strand" evidence="6">
    <location>
        <begin position="545"/>
        <end position="550"/>
    </location>
</feature>
<feature type="helix" evidence="6">
    <location>
        <begin position="553"/>
        <end position="557"/>
    </location>
</feature>
<feature type="turn" evidence="6">
    <location>
        <begin position="565"/>
        <end position="569"/>
    </location>
</feature>
<feature type="helix" evidence="6">
    <location>
        <begin position="572"/>
        <end position="574"/>
    </location>
</feature>
<feature type="strand" evidence="6">
    <location>
        <begin position="575"/>
        <end position="578"/>
    </location>
</feature>
<feature type="strand" evidence="6">
    <location>
        <begin position="584"/>
        <end position="586"/>
    </location>
</feature>
<feature type="helix" evidence="6">
    <location>
        <begin position="587"/>
        <end position="592"/>
    </location>
</feature>
<feature type="strand" evidence="6">
    <location>
        <begin position="595"/>
        <end position="598"/>
    </location>
</feature>
<feature type="strand" evidence="6">
    <location>
        <begin position="602"/>
        <end position="605"/>
    </location>
</feature>
<feature type="turn" evidence="6">
    <location>
        <begin position="607"/>
        <end position="609"/>
    </location>
</feature>
<feature type="helix" evidence="6">
    <location>
        <begin position="610"/>
        <end position="624"/>
    </location>
</feature>
<feature type="turn" evidence="6">
    <location>
        <begin position="631"/>
        <end position="633"/>
    </location>
</feature>
<feature type="strand" evidence="6">
    <location>
        <begin position="641"/>
        <end position="643"/>
    </location>
</feature>
<feature type="strand" evidence="6">
    <location>
        <begin position="645"/>
        <end position="647"/>
    </location>
</feature>
<feature type="strand" evidence="6">
    <location>
        <begin position="653"/>
        <end position="656"/>
    </location>
</feature>
<feature type="helix" evidence="6">
    <location>
        <begin position="663"/>
        <end position="667"/>
    </location>
</feature>
<feature type="helix" evidence="6">
    <location>
        <begin position="669"/>
        <end position="677"/>
    </location>
</feature>
<feature type="helix" evidence="6">
    <location>
        <begin position="678"/>
        <end position="681"/>
    </location>
</feature>
<feature type="helix" evidence="6">
    <location>
        <begin position="685"/>
        <end position="690"/>
    </location>
</feature>
<comment type="function">
    <text>Transferrins are iron binding transport proteins which can bind two Fe(3+) ions in association with the binding of an anion, usually bicarbonate. It is responsible for the transport of iron from sites of absorption and heme degradation to those of storage and utilization. Serum transferrin may also have a further role in stimulating cell proliferation.</text>
</comment>
<comment type="subunit">
    <text evidence="1">Monomer. Part of a complex composed of SLC40A1/ferroportin, TF/transferrin and HEPH/hephaestin that transfers iron from cells to transferrin.</text>
</comment>
<comment type="subcellular location">
    <subcellularLocation>
        <location>Secreted</location>
    </subcellularLocation>
</comment>
<comment type="tissue specificity">
    <text>Expressed by the liver and secreted in plasma.</text>
</comment>
<comment type="similarity">
    <text evidence="3">Belongs to the transferrin family.</text>
</comment>
<sequence length="695" mass="76670">MRLAAGALLACAALGLCLAVTEKTVRWCAVNDHEASKCANFRDSMKKVLPEDGPRIICVKKASYLDCIKAIAAHEADAVTLDAGLVHEAGLTPNNLKPVVAEFYGSKENPKTFYYAVALVKKGSNFQLNELQGKKSCHTGLGRSAGWNIPIGLLYCDLPEPRKPLEKAVASFFSGSCVPCADGADFPQLCQLCPGCGCSSVQPYFGYSGAFKCLKDGLGDVAFVKQETIFENLPSKDERDQYELLCLDNTRKPVDEYEQCHLARVPSHAVVARSVDGKEDLIWELLNQAQEHFGKDKSGDFQLFSSPHGKNLLFKDSAYGFFKVPPRMDANLYLGYEYVTAVRNLREGICPDPLQDECKAVKWCALSHHERLKCDEWSVTSGGLIECESAETPEDCIAKIMNGEADAMSLDGGYVYIAGQCGLVPVLAENYESTDCKKAPEEGYLSVAVVKKSNPDINWNNLEGKKSCHTAVDRTAGWNIPMGLLYNRINHCRFDEFFRQGCAPGSQKNSSLCELCVGPSVCAPNNREGYYGYTGAFRCLVEKGDVAFVKSQTVLQNTGGRNSEPWAKDLKEEDFELLCLDGTRKPVSEAHNCHLAKAPNHAVVSRKDKAACVKQKLLDLQVEYGNTVADCSSKFCMFHSKTKDLLFRDDTKCLVDLRGKNTYEKYLGADYIKAVSNLRKCSTSRLLEACTFHKH</sequence>
<reference key="1">
    <citation type="journal article" date="1991" name="Biochim. Biophys. Acta">
        <title>The nucleotide sequence of rabbit liver transferrin cDNA.</title>
        <authorList>
            <person name="Banfield D.K."/>
            <person name="Chow B.K.-C."/>
            <person name="Funk W.D."/>
            <person name="Robertson K.A."/>
            <person name="Umelas T.M."/>
            <person name="Woodworth R.C."/>
            <person name="Macgillivray R.T.A."/>
        </authorList>
    </citation>
    <scope>NUCLEOTIDE SEQUENCE [MRNA]</scope>
    <source>
        <tissue>Liver</tissue>
    </source>
</reference>
<reference key="2">
    <citation type="submission" date="1997-10" db="EMBL/GenBank/DDBJ databases">
        <title>Cloning and structural organisation of the rabbit transferrin encoding gene.</title>
        <authorList>
            <person name="Ghareeb B.A.A."/>
            <person name="Thepot D."/>
            <person name="Puissant C."/>
            <person name="Cajero-Juaerez M."/>
            <person name="Houdebine L.-M."/>
        </authorList>
    </citation>
    <scope>NUCLEOTIDE SEQUENCE [GENOMIC DNA]</scope>
    <source>
        <strain>New Zealand white</strain>
    </source>
</reference>
<reference key="3">
    <citation type="journal article" date="1988" name="Biol. Chem. Hoppe-Seyler">
        <title>Isolation, characterization and N-terminal amino-acid sequence of rabbit transferrin.</title>
        <authorList>
            <person name="Godovac-Zimmermann J."/>
        </authorList>
    </citation>
    <scope>PROTEIN SEQUENCE OF 20-51</scope>
</reference>
<reference key="4">
    <citation type="journal article" date="1988" name="FEBS Lett.">
        <title>Evidence for a single glycan moiety in rabbit serum transferrin and location of the glycan within the polypeptide chain.</title>
        <authorList>
            <person name="Evans R.W."/>
            <person name="Aitken A."/>
            <person name="Patel K.J."/>
        </authorList>
    </citation>
    <scope>PROTEIN SEQUENCE OF 483-545</scope>
</reference>
<reference key="5">
    <citation type="journal article" date="1988" name="Biochemistry">
        <title>Molecular structure of serum transferrin at 3.3-A resolution.</title>
        <authorList>
            <person name="Bailey S."/>
            <person name="Evans R.W."/>
            <person name="Garratt R.C."/>
            <person name="Gorinsky B."/>
            <person name="Hasnain S."/>
            <person name="Horsburgh C."/>
            <person name="Jhoti H."/>
            <person name="Lindley P.F."/>
            <person name="Mydin A."/>
            <person name="Sarra R."/>
            <person name="Watson J.L."/>
        </authorList>
    </citation>
    <scope>X-RAY CRYSTALLOGRAPHY (3.3 ANGSTROMS)</scope>
    <source>
        <tissue>Plasma</tissue>
    </source>
</reference>
<reference key="6">
    <citation type="journal article" date="1990" name="Acta Crystallogr. B">
        <title>High-resolution X-ray studies on rabbit serum transferrin: preliminary structure analysis of the N-terminal half-molecule at 2.3-A resolution.</title>
        <authorList>
            <person name="Sarra R."/>
            <person name="Garratt R.C."/>
            <person name="Gorinsky B."/>
            <person name="Jhoti H."/>
            <person name="Lindley P.F."/>
        </authorList>
    </citation>
    <scope>X-RAY CRYSTALLOGRAPHY (2.3 ANGSTROMS)</scope>
</reference>
<organism>
    <name type="scientific">Oryctolagus cuniculus</name>
    <name type="common">Rabbit</name>
    <dbReference type="NCBI Taxonomy" id="9986"/>
    <lineage>
        <taxon>Eukaryota</taxon>
        <taxon>Metazoa</taxon>
        <taxon>Chordata</taxon>
        <taxon>Craniata</taxon>
        <taxon>Vertebrata</taxon>
        <taxon>Euteleostomi</taxon>
        <taxon>Mammalia</taxon>
        <taxon>Eutheria</taxon>
        <taxon>Euarchontoglires</taxon>
        <taxon>Glires</taxon>
        <taxon>Lagomorpha</taxon>
        <taxon>Leporidae</taxon>
        <taxon>Oryctolagus</taxon>
    </lineage>
</organism>
<gene>
    <name type="primary">TF</name>
</gene>
<name>TRFE_RABIT</name>
<accession>P19134</accession>
<accession>O46514</accession>
<evidence type="ECO:0000250" key="1">
    <source>
        <dbReference type="UniProtKB" id="P02787"/>
    </source>
</evidence>
<evidence type="ECO:0000250" key="2">
    <source>
        <dbReference type="UniProtKB" id="P12346"/>
    </source>
</evidence>
<evidence type="ECO:0000255" key="3">
    <source>
        <dbReference type="PROSITE-ProRule" id="PRU00741"/>
    </source>
</evidence>
<evidence type="ECO:0000269" key="4">
    <source>
    </source>
</evidence>
<evidence type="ECO:0000305" key="5"/>
<evidence type="ECO:0007829" key="6">
    <source>
        <dbReference type="PDB" id="1JNF"/>
    </source>
</evidence>
<evidence type="ECO:0007829" key="7">
    <source>
        <dbReference type="PDB" id="1TFD"/>
    </source>
</evidence>
<dbReference type="EMBL" id="X58533">
    <property type="protein sequence ID" value="CAA41424.1"/>
    <property type="molecule type" value="mRNA"/>
</dbReference>
<dbReference type="EMBL" id="AF031625">
    <property type="protein sequence ID" value="AAB94136.1"/>
    <property type="molecule type" value="Genomic_DNA"/>
</dbReference>
<dbReference type="EMBL" id="AF031611">
    <property type="protein sequence ID" value="AAB94136.1"/>
    <property type="status" value="JOINED"/>
    <property type="molecule type" value="Genomic_DNA"/>
</dbReference>
<dbReference type="EMBL" id="AF031612">
    <property type="protein sequence ID" value="AAB94136.1"/>
    <property type="status" value="JOINED"/>
    <property type="molecule type" value="Genomic_DNA"/>
</dbReference>
<dbReference type="EMBL" id="AF031613">
    <property type="protein sequence ID" value="AAB94136.1"/>
    <property type="status" value="JOINED"/>
    <property type="molecule type" value="Genomic_DNA"/>
</dbReference>
<dbReference type="EMBL" id="AF031614">
    <property type="protein sequence ID" value="AAB94136.1"/>
    <property type="status" value="JOINED"/>
    <property type="molecule type" value="Genomic_DNA"/>
</dbReference>
<dbReference type="EMBL" id="AF031615">
    <property type="protein sequence ID" value="AAB94136.1"/>
    <property type="status" value="JOINED"/>
    <property type="molecule type" value="Genomic_DNA"/>
</dbReference>
<dbReference type="EMBL" id="AF031616">
    <property type="protein sequence ID" value="AAB94136.1"/>
    <property type="status" value="JOINED"/>
    <property type="molecule type" value="Genomic_DNA"/>
</dbReference>
<dbReference type="EMBL" id="AF031617">
    <property type="protein sequence ID" value="AAB94136.1"/>
    <property type="status" value="JOINED"/>
    <property type="molecule type" value="Genomic_DNA"/>
</dbReference>
<dbReference type="EMBL" id="AF031618">
    <property type="protein sequence ID" value="AAB94136.1"/>
    <property type="status" value="JOINED"/>
    <property type="molecule type" value="Genomic_DNA"/>
</dbReference>
<dbReference type="EMBL" id="AF031619">
    <property type="protein sequence ID" value="AAB94136.1"/>
    <property type="status" value="JOINED"/>
    <property type="molecule type" value="Genomic_DNA"/>
</dbReference>
<dbReference type="EMBL" id="AF031620">
    <property type="protein sequence ID" value="AAB94136.1"/>
    <property type="status" value="JOINED"/>
    <property type="molecule type" value="Genomic_DNA"/>
</dbReference>
<dbReference type="EMBL" id="AF031621">
    <property type="protein sequence ID" value="AAB94136.1"/>
    <property type="status" value="JOINED"/>
    <property type="molecule type" value="Genomic_DNA"/>
</dbReference>
<dbReference type="EMBL" id="AF031622">
    <property type="protein sequence ID" value="AAB94136.1"/>
    <property type="status" value="JOINED"/>
    <property type="molecule type" value="Genomic_DNA"/>
</dbReference>
<dbReference type="EMBL" id="AF031623">
    <property type="protein sequence ID" value="AAB94136.1"/>
    <property type="status" value="JOINED"/>
    <property type="molecule type" value="Genomic_DNA"/>
</dbReference>
<dbReference type="EMBL" id="AF031624">
    <property type="protein sequence ID" value="AAB94136.1"/>
    <property type="status" value="JOINED"/>
    <property type="molecule type" value="Genomic_DNA"/>
</dbReference>
<dbReference type="PIR" id="S16246">
    <property type="entry name" value="TFRBP"/>
</dbReference>
<dbReference type="RefSeq" id="NP_001095164.1">
    <property type="nucleotide sequence ID" value="NM_001101694.1"/>
</dbReference>
<dbReference type="PDB" id="1JNF">
    <property type="method" value="X-ray"/>
    <property type="resolution" value="2.60 A"/>
    <property type="chains" value="A=20-695"/>
</dbReference>
<dbReference type="PDB" id="1TFD">
    <property type="method" value="X-ray"/>
    <property type="resolution" value="2.30 A"/>
    <property type="chains" value="A=20-323"/>
</dbReference>
<dbReference type="PDBsum" id="1JNF"/>
<dbReference type="PDBsum" id="1TFD"/>
<dbReference type="SMR" id="P19134"/>
<dbReference type="FunCoup" id="P19134">
    <property type="interactions" value="153"/>
</dbReference>
<dbReference type="MEROPS" id="S60.972"/>
<dbReference type="GlyCosmos" id="P19134">
    <property type="glycosylation" value="1 site, No reported glycans"/>
</dbReference>
<dbReference type="PaxDb" id="9986-ENSOCUP00000006587"/>
<dbReference type="GeneID" id="100009267"/>
<dbReference type="KEGG" id="ocu:100009267"/>
<dbReference type="CTD" id="7018"/>
<dbReference type="eggNOG" id="ENOG502QT0C">
    <property type="taxonomic scope" value="Eukaryota"/>
</dbReference>
<dbReference type="InParanoid" id="P19134"/>
<dbReference type="OrthoDB" id="41266at2759"/>
<dbReference type="EvolutionaryTrace" id="P19134"/>
<dbReference type="Proteomes" id="UP000001811">
    <property type="component" value="Unplaced"/>
</dbReference>
<dbReference type="GO" id="GO:0005769">
    <property type="term" value="C:early endosome"/>
    <property type="evidence" value="ECO:0007669"/>
    <property type="project" value="TreeGrafter"/>
</dbReference>
<dbReference type="GO" id="GO:0005615">
    <property type="term" value="C:extracellular space"/>
    <property type="evidence" value="ECO:0007669"/>
    <property type="project" value="InterPro"/>
</dbReference>
<dbReference type="GO" id="GO:0005886">
    <property type="term" value="C:plasma membrane"/>
    <property type="evidence" value="ECO:0007669"/>
    <property type="project" value="TreeGrafter"/>
</dbReference>
<dbReference type="GO" id="GO:0055037">
    <property type="term" value="C:recycling endosome"/>
    <property type="evidence" value="ECO:0007669"/>
    <property type="project" value="TreeGrafter"/>
</dbReference>
<dbReference type="GO" id="GO:0008199">
    <property type="term" value="F:ferric iron binding"/>
    <property type="evidence" value="ECO:0007669"/>
    <property type="project" value="InterPro"/>
</dbReference>
<dbReference type="GO" id="GO:0019731">
    <property type="term" value="P:antibacterial humoral response"/>
    <property type="evidence" value="ECO:0007669"/>
    <property type="project" value="TreeGrafter"/>
</dbReference>
<dbReference type="GO" id="GO:0006879">
    <property type="term" value="P:intracellular iron ion homeostasis"/>
    <property type="evidence" value="ECO:0007669"/>
    <property type="project" value="InterPro"/>
</dbReference>
<dbReference type="GO" id="GO:0006826">
    <property type="term" value="P:iron ion transport"/>
    <property type="evidence" value="ECO:0007669"/>
    <property type="project" value="UniProtKB-KW"/>
</dbReference>
<dbReference type="CDD" id="cd13617">
    <property type="entry name" value="PBP2_transferrin_C"/>
    <property type="match status" value="1"/>
</dbReference>
<dbReference type="CDD" id="cd13618">
    <property type="entry name" value="PBP2_transferrin_N"/>
    <property type="match status" value="1"/>
</dbReference>
<dbReference type="FunFam" id="3.40.190.10:FF:000095">
    <property type="entry name" value="Lactotransferrin"/>
    <property type="match status" value="1"/>
</dbReference>
<dbReference type="FunFam" id="3.40.190.10:FF:000105">
    <property type="entry name" value="Serotransferrin"/>
    <property type="match status" value="1"/>
</dbReference>
<dbReference type="Gene3D" id="3.40.190.10">
    <property type="entry name" value="Periplasmic binding protein-like II"/>
    <property type="match status" value="4"/>
</dbReference>
<dbReference type="InterPro" id="IPR030685">
    <property type="entry name" value="Serotransferrin_mammal"/>
</dbReference>
<dbReference type="InterPro" id="IPR016357">
    <property type="entry name" value="Transferrin"/>
</dbReference>
<dbReference type="InterPro" id="IPR001156">
    <property type="entry name" value="Transferrin-like_dom"/>
</dbReference>
<dbReference type="InterPro" id="IPR018195">
    <property type="entry name" value="Transferrin_Fe_BS"/>
</dbReference>
<dbReference type="PANTHER" id="PTHR11485:SF31">
    <property type="entry name" value="SEROTRANSFERRIN"/>
    <property type="match status" value="1"/>
</dbReference>
<dbReference type="PANTHER" id="PTHR11485">
    <property type="entry name" value="TRANSFERRIN"/>
    <property type="match status" value="1"/>
</dbReference>
<dbReference type="Pfam" id="PF00405">
    <property type="entry name" value="Transferrin"/>
    <property type="match status" value="2"/>
</dbReference>
<dbReference type="PIRSF" id="PIRSF500682">
    <property type="entry name" value="Serotransferrin"/>
    <property type="match status" value="1"/>
</dbReference>
<dbReference type="PIRSF" id="PIRSF002549">
    <property type="entry name" value="Transferrin"/>
    <property type="match status" value="1"/>
</dbReference>
<dbReference type="PRINTS" id="PR00422">
    <property type="entry name" value="TRANSFERRIN"/>
</dbReference>
<dbReference type="SMART" id="SM00094">
    <property type="entry name" value="TR_FER"/>
    <property type="match status" value="2"/>
</dbReference>
<dbReference type="SUPFAM" id="SSF53850">
    <property type="entry name" value="Periplasmic binding protein-like II"/>
    <property type="match status" value="2"/>
</dbReference>
<dbReference type="PROSITE" id="PS00205">
    <property type="entry name" value="TRANSFERRIN_LIKE_1"/>
    <property type="match status" value="1"/>
</dbReference>
<dbReference type="PROSITE" id="PS00206">
    <property type="entry name" value="TRANSFERRIN_LIKE_2"/>
    <property type="match status" value="2"/>
</dbReference>
<dbReference type="PROSITE" id="PS00207">
    <property type="entry name" value="TRANSFERRIN_LIKE_3"/>
    <property type="match status" value="2"/>
</dbReference>
<dbReference type="PROSITE" id="PS51408">
    <property type="entry name" value="TRANSFERRIN_LIKE_4"/>
    <property type="match status" value="2"/>
</dbReference>
<proteinExistence type="evidence at protein level"/>
<keyword id="KW-0002">3D-structure</keyword>
<keyword id="KW-0903">Direct protein sequencing</keyword>
<keyword id="KW-1015">Disulfide bond</keyword>
<keyword id="KW-0325">Glycoprotein</keyword>
<keyword id="KW-0406">Ion transport</keyword>
<keyword id="KW-0408">Iron</keyword>
<keyword id="KW-0410">Iron transport</keyword>
<keyword id="KW-0479">Metal-binding</keyword>
<keyword id="KW-0488">Methylation</keyword>
<keyword id="KW-0597">Phosphoprotein</keyword>
<keyword id="KW-1185">Reference proteome</keyword>
<keyword id="KW-0677">Repeat</keyword>
<keyword id="KW-0964">Secreted</keyword>
<keyword id="KW-0732">Signal</keyword>
<keyword id="KW-0813">Transport</keyword>
<protein>
    <recommendedName>
        <fullName>Serotransferrin</fullName>
        <shortName>Transferrin</shortName>
    </recommendedName>
    <alternativeName>
        <fullName>Beta-1 metal-binding globulin</fullName>
    </alternativeName>
    <alternativeName>
        <fullName>Siderophilin</fullName>
    </alternativeName>
</protein>